<feature type="chain" id="PRO_0000193112" description="Long-chain-fatty-acid--CoA ligase 5">
    <location>
        <begin position="1"/>
        <end position="683"/>
    </location>
</feature>
<feature type="transmembrane region" description="Helical; Signal-anchor for type III membrane protein" evidence="4">
    <location>
        <begin position="12"/>
        <end position="32"/>
    </location>
</feature>
<feature type="topological domain" description="Cytoplasmic" evidence="4">
    <location>
        <begin position="33"/>
        <end position="683"/>
    </location>
</feature>
<feature type="modified residue" description="N6-acetyllysine" evidence="3">
    <location>
        <position position="361"/>
    </location>
</feature>
<feature type="splice variant" id="VSP_037947" description="In isoform 2." evidence="12 13 15">
    <original>M</original>
    <variation>MDALKPPCLWRNHERGKKDRDSCGRKNSEPGSPHSLEALRDAAPSQGLNFLLLFTKM</variation>
    <location>
        <position position="1"/>
    </location>
</feature>
<feature type="splice variant" id="VSP_038233" description="In isoform 3." evidence="14">
    <location>
        <begin position="614"/>
        <end position="637"/>
    </location>
</feature>
<feature type="sequence variant" id="VAR_022117" description="In dbSNP:rs3736946.">
    <original>M</original>
    <variation>V</variation>
    <location>
        <position position="182"/>
    </location>
</feature>
<feature type="sequence variant" id="VAR_036377" description="In a colorectal cancer sample; somatic mutation." evidence="5">
    <original>K</original>
    <variation>R</variation>
    <location>
        <position position="388"/>
    </location>
</feature>
<feature type="sequence variant" id="VAR_088452" description="In DIAR13; loss of oleoyl-CoA ligase activity; does not affect localization to mitochondrion; does not affect localization to endoplasmic reticulum." evidence="11">
    <original>T</original>
    <variation>K</variation>
    <location>
        <position position="453"/>
    </location>
</feature>
<feature type="sequence variant" id="VAR_036378" description="In a colorectal cancer sample; somatic mutation." evidence="5">
    <original>G</original>
    <variation>D</variation>
    <location>
        <position position="466"/>
    </location>
</feature>
<feature type="sequence variant" id="VAR_048240" description="In dbSNP:rs12254915.">
    <original>T</original>
    <variation>A</variation>
    <location>
        <position position="486"/>
    </location>
</feature>
<feature type="modified residue" description="Phosphoserine" evidence="22">
    <location sequence="Q9ULC5-3">
        <position position="32"/>
    </location>
</feature>
<evidence type="ECO:0000250" key="1"/>
<evidence type="ECO:0000250" key="2">
    <source>
        <dbReference type="UniProtKB" id="O88813"/>
    </source>
</evidence>
<evidence type="ECO:0000250" key="3">
    <source>
        <dbReference type="UniProtKB" id="Q8JZR0"/>
    </source>
</evidence>
<evidence type="ECO:0000255" key="4"/>
<evidence type="ECO:0000269" key="5">
    <source>
    </source>
</evidence>
<evidence type="ECO:0000269" key="6">
    <source>
    </source>
</evidence>
<evidence type="ECO:0000269" key="7">
    <source>
    </source>
</evidence>
<evidence type="ECO:0000269" key="8">
    <source>
    </source>
</evidence>
<evidence type="ECO:0000269" key="9">
    <source>
    </source>
</evidence>
<evidence type="ECO:0000269" key="10">
    <source>
    </source>
</evidence>
<evidence type="ECO:0000269" key="11">
    <source>
    </source>
</evidence>
<evidence type="ECO:0000303" key="12">
    <source>
    </source>
</evidence>
<evidence type="ECO:0000303" key="13">
    <source>
    </source>
</evidence>
<evidence type="ECO:0000303" key="14">
    <source>
    </source>
</evidence>
<evidence type="ECO:0000303" key="15">
    <source ref="4"/>
</evidence>
<evidence type="ECO:0000303" key="16">
    <source ref="8"/>
</evidence>
<evidence type="ECO:0000305" key="17"/>
<evidence type="ECO:0000305" key="18">
    <source>
    </source>
</evidence>
<evidence type="ECO:0000305" key="19">
    <source>
    </source>
</evidence>
<evidence type="ECO:0000305" key="20">
    <source>
    </source>
</evidence>
<evidence type="ECO:0000312" key="21">
    <source>
        <dbReference type="HGNC" id="HGNC:16526"/>
    </source>
</evidence>
<evidence type="ECO:0007744" key="22">
    <source>
    </source>
</evidence>
<comment type="function">
    <text evidence="1 6 7 8 9 10 11">Catalyzes the conversion of long-chain fatty acids to their active form acyl-CoAs for both synthesis of cellular lipids, and degradation via beta-oxidation (PubMed:17681178, PubMed:22633490, PubMed:24269233, PubMed:33191500). ACSL5 may activate fatty acids from exogenous sources for the synthesis of triacylglycerol destined for intracellular storage (By similarity). Utilizes a wide range of saturated fatty acids with a preference for C16-C18 unsaturated fatty acids (By similarity). It was suggested that it may also stimulate fatty acid oxidation (By similarity). At the villus tip of the crypt-villus axis of the small intestine may sensitize epithelial cells to apoptosis specifically triggered by the death ligand TRAIL. May have a role in the survival of glioma cells.</text>
</comment>
<comment type="catalytic activity">
    <reaction evidence="6 9 10">
        <text>a long-chain fatty acid + ATP + CoA = a long-chain fatty acyl-CoA + AMP + diphosphate</text>
        <dbReference type="Rhea" id="RHEA:15421"/>
        <dbReference type="ChEBI" id="CHEBI:30616"/>
        <dbReference type="ChEBI" id="CHEBI:33019"/>
        <dbReference type="ChEBI" id="CHEBI:57287"/>
        <dbReference type="ChEBI" id="CHEBI:57560"/>
        <dbReference type="ChEBI" id="CHEBI:83139"/>
        <dbReference type="ChEBI" id="CHEBI:456215"/>
        <dbReference type="EC" id="6.2.1.3"/>
    </reaction>
    <physiologicalReaction direction="left-to-right" evidence="18 19">
        <dbReference type="Rhea" id="RHEA:15422"/>
    </physiologicalReaction>
</comment>
<comment type="catalytic activity">
    <reaction evidence="2">
        <text>(5Z,8Z,11Z,14Z)-eicosatetraenoate + ATP + CoA = (5Z,8Z,11Z,14Z)-eicosatetraenoyl-CoA + AMP + diphosphate</text>
        <dbReference type="Rhea" id="RHEA:19713"/>
        <dbReference type="ChEBI" id="CHEBI:30616"/>
        <dbReference type="ChEBI" id="CHEBI:32395"/>
        <dbReference type="ChEBI" id="CHEBI:33019"/>
        <dbReference type="ChEBI" id="CHEBI:57287"/>
        <dbReference type="ChEBI" id="CHEBI:57368"/>
        <dbReference type="ChEBI" id="CHEBI:456215"/>
        <dbReference type="EC" id="6.2.1.15"/>
    </reaction>
    <physiologicalReaction direction="left-to-right" evidence="2">
        <dbReference type="Rhea" id="RHEA:19714"/>
    </physiologicalReaction>
</comment>
<comment type="catalytic activity">
    <reaction evidence="10">
        <text>hexadecanoate + ATP + CoA = hexadecanoyl-CoA + AMP + diphosphate</text>
        <dbReference type="Rhea" id="RHEA:30751"/>
        <dbReference type="ChEBI" id="CHEBI:7896"/>
        <dbReference type="ChEBI" id="CHEBI:30616"/>
        <dbReference type="ChEBI" id="CHEBI:33019"/>
        <dbReference type="ChEBI" id="CHEBI:57287"/>
        <dbReference type="ChEBI" id="CHEBI:57379"/>
        <dbReference type="ChEBI" id="CHEBI:456215"/>
    </reaction>
    <physiologicalReaction direction="left-to-right" evidence="19">
        <dbReference type="Rhea" id="RHEA:30752"/>
    </physiologicalReaction>
</comment>
<comment type="catalytic activity">
    <reaction evidence="9 19">
        <text>(E)-hexadec-2-enoate + ATP + CoA = (2E)-hexadecenoyl-CoA + AMP + diphosphate</text>
        <dbReference type="Rhea" id="RHEA:36139"/>
        <dbReference type="ChEBI" id="CHEBI:30616"/>
        <dbReference type="ChEBI" id="CHEBI:33019"/>
        <dbReference type="ChEBI" id="CHEBI:57287"/>
        <dbReference type="ChEBI" id="CHEBI:61526"/>
        <dbReference type="ChEBI" id="CHEBI:72745"/>
        <dbReference type="ChEBI" id="CHEBI:456215"/>
    </reaction>
    <physiologicalReaction direction="left-to-right" evidence="18 19">
        <dbReference type="Rhea" id="RHEA:36140"/>
    </physiologicalReaction>
</comment>
<comment type="catalytic activity">
    <reaction evidence="2">
        <text>15-hydroxy-(5Z,8Z,11Z,13E)-eicosatetraenoate + ATP + CoA = 15-hydroxy-(5Z,8Z,11Z,13E)-eicosatetraenoyl-CoA + AMP + diphosphate</text>
        <dbReference type="Rhea" id="RHEA:52116"/>
        <dbReference type="ChEBI" id="CHEBI:30616"/>
        <dbReference type="ChEBI" id="CHEBI:33019"/>
        <dbReference type="ChEBI" id="CHEBI:57287"/>
        <dbReference type="ChEBI" id="CHEBI:78832"/>
        <dbReference type="ChEBI" id="CHEBI:136409"/>
        <dbReference type="ChEBI" id="CHEBI:456215"/>
    </reaction>
    <physiologicalReaction direction="left-to-right" evidence="2">
        <dbReference type="Rhea" id="RHEA:52117"/>
    </physiologicalReaction>
</comment>
<comment type="catalytic activity">
    <reaction evidence="2">
        <text>12-hydroxy-(5Z,8Z,10E,14Z)-eicosatetraenoate + ATP + CoA = 12-hydroxy-(5Z,8Z,10E,14Z)-eicosatetraenoyl-CoA + AMP + diphosphate</text>
        <dbReference type="Rhea" id="RHEA:52112"/>
        <dbReference type="ChEBI" id="CHEBI:30616"/>
        <dbReference type="ChEBI" id="CHEBI:33019"/>
        <dbReference type="ChEBI" id="CHEBI:57287"/>
        <dbReference type="ChEBI" id="CHEBI:90718"/>
        <dbReference type="ChEBI" id="CHEBI:136408"/>
        <dbReference type="ChEBI" id="CHEBI:456215"/>
    </reaction>
    <physiologicalReaction direction="left-to-right" evidence="2">
        <dbReference type="Rhea" id="RHEA:52113"/>
    </physiologicalReaction>
</comment>
<comment type="catalytic activity">
    <reaction evidence="2">
        <text>5-hydroxy-(6E,8Z,11Z,14Z)-eicosatetraenoate + ATP + CoA = 5-hydroxy-(6E,8Z,11Z,14Z)-eicosatetraenoyl-CoA + AMP + diphosphate</text>
        <dbReference type="Rhea" id="RHEA:52108"/>
        <dbReference type="ChEBI" id="CHEBI:30616"/>
        <dbReference type="ChEBI" id="CHEBI:33019"/>
        <dbReference type="ChEBI" id="CHEBI:57287"/>
        <dbReference type="ChEBI" id="CHEBI:65341"/>
        <dbReference type="ChEBI" id="CHEBI:136407"/>
        <dbReference type="ChEBI" id="CHEBI:456215"/>
    </reaction>
    <physiologicalReaction direction="left-to-right" evidence="2">
        <dbReference type="Rhea" id="RHEA:52109"/>
    </physiologicalReaction>
</comment>
<comment type="catalytic activity">
    <reaction evidence="2">
        <text>14,15-epoxy-(5Z,8Z,11Z)-eicosatrienoate + ATP + CoA = 14,15-epoxy-(5Z,8Z,11Z)-eicosatrienoyl-CoA + AMP + diphosphate</text>
        <dbReference type="Rhea" id="RHEA:52016"/>
        <dbReference type="ChEBI" id="CHEBI:30616"/>
        <dbReference type="ChEBI" id="CHEBI:33019"/>
        <dbReference type="ChEBI" id="CHEBI:57287"/>
        <dbReference type="ChEBI" id="CHEBI:84024"/>
        <dbReference type="ChEBI" id="CHEBI:136117"/>
        <dbReference type="ChEBI" id="CHEBI:456215"/>
    </reaction>
    <physiologicalReaction direction="left-to-right" evidence="2">
        <dbReference type="Rhea" id="RHEA:52017"/>
    </physiologicalReaction>
</comment>
<comment type="catalytic activity">
    <reaction evidence="2">
        <text>11,12-epoxy-(5Z,8Z,14Z)-eicosatrienoate + ATP + CoA = 11,12-epoxy-(5Z,8Z,14Z)-eicosatrienoyl-CoA + AMP + diphosphate</text>
        <dbReference type="Rhea" id="RHEA:52012"/>
        <dbReference type="ChEBI" id="CHEBI:30616"/>
        <dbReference type="ChEBI" id="CHEBI:33019"/>
        <dbReference type="ChEBI" id="CHEBI:57287"/>
        <dbReference type="ChEBI" id="CHEBI:76625"/>
        <dbReference type="ChEBI" id="CHEBI:136115"/>
        <dbReference type="ChEBI" id="CHEBI:456215"/>
    </reaction>
    <physiologicalReaction direction="left-to-right" evidence="2">
        <dbReference type="Rhea" id="RHEA:52013"/>
    </physiologicalReaction>
</comment>
<comment type="catalytic activity">
    <reaction evidence="11">
        <text>(9Z)-octadecenoate + ATP + CoA = (9Z)-octadecenoyl-CoA + AMP + diphosphate</text>
        <dbReference type="Rhea" id="RHEA:33607"/>
        <dbReference type="ChEBI" id="CHEBI:30616"/>
        <dbReference type="ChEBI" id="CHEBI:30823"/>
        <dbReference type="ChEBI" id="CHEBI:33019"/>
        <dbReference type="ChEBI" id="CHEBI:57287"/>
        <dbReference type="ChEBI" id="CHEBI:57387"/>
        <dbReference type="ChEBI" id="CHEBI:456215"/>
    </reaction>
    <physiologicalReaction direction="left-to-right" evidence="20">
        <dbReference type="Rhea" id="RHEA:33608"/>
    </physiologicalReaction>
</comment>
<comment type="cofactor">
    <cofactor evidence="1">
        <name>Mg(2+)</name>
        <dbReference type="ChEBI" id="CHEBI:18420"/>
    </cofactor>
</comment>
<comment type="biophysicochemical properties">
    <molecule>Isoform 1</molecule>
    <kinetics>
        <KM evidence="6">0.11 uM for palmitic acid (at pH 7.5)</KM>
        <KM evidence="6">0.38 uM for palmitic acid (at pH 9.5)</KM>
    </kinetics>
    <phDependence>
        <text evidence="6">Optimum pH is 9.5.</text>
    </phDependence>
</comment>
<comment type="biophysicochemical properties">
    <molecule>Isoform 3</molecule>
    <kinetics>
        <KM evidence="6">0.04 uM for palmitic acid (at pH 7.5)</KM>
        <KM evidence="6">0.15 uM for palmitic acid (at pH 8.5)</KM>
    </kinetics>
    <phDependence>
        <text evidence="6">Optimum pH is 7.5-8.5.</text>
    </phDependence>
</comment>
<comment type="interaction">
    <interactant intactId="EBI-2876927">
        <id>Q9ULC5</id>
    </interactant>
    <interactant intactId="EBI-13059134">
        <id>Q13520</id>
        <label>AQP6</label>
    </interactant>
    <organismsDiffer>false</organismsDiffer>
    <experiments>3</experiments>
</comment>
<comment type="interaction">
    <interactant intactId="EBI-2876927">
        <id>Q9ULC5</id>
    </interactant>
    <interactant intactId="EBI-8787095">
        <id>O00559</id>
        <label>EBAG9</label>
    </interactant>
    <organismsDiffer>false</organismsDiffer>
    <experiments>3</experiments>
</comment>
<comment type="interaction">
    <interactant intactId="EBI-2876927">
        <id>Q9ULC5</id>
    </interactant>
    <interactant intactId="EBI-594836">
        <id>O00623</id>
        <label>PEX12</label>
    </interactant>
    <organismsDiffer>false</organismsDiffer>
    <experiments>3</experiments>
</comment>
<comment type="interaction">
    <interactant intactId="EBI-2876927">
        <id>Q9ULC5</id>
    </interactant>
    <interactant intactId="EBI-10192441">
        <id>Q86VR2</id>
        <label>RETREG3</label>
    </interactant>
    <organismsDiffer>false</organismsDiffer>
    <experiments>5</experiments>
</comment>
<comment type="interaction">
    <interactant intactId="EBI-2876927">
        <id>Q9ULC5</id>
    </interactant>
    <interactant intactId="EBI-751012">
        <id>Q8WU57</id>
        <label>SELI</label>
    </interactant>
    <organismsDiffer>false</organismsDiffer>
    <experiments>3</experiments>
</comment>
<comment type="interaction">
    <interactant intactId="EBI-2876927">
        <id>Q9ULC5</id>
    </interactant>
    <interactant intactId="EBI-3923031">
        <id>Q14973</id>
        <label>SLC10A1</label>
    </interactant>
    <organismsDiffer>false</organismsDiffer>
    <experiments>3</experiments>
</comment>
<comment type="interaction">
    <interactant intactId="EBI-2876927">
        <id>Q9ULC5</id>
    </interactant>
    <interactant intactId="EBI-18159983">
        <id>Q3KNW5</id>
        <label>SLC10A6</label>
    </interactant>
    <organismsDiffer>false</organismsDiffer>
    <experiments>3</experiments>
</comment>
<comment type="interaction">
    <interactant intactId="EBI-2876927">
        <id>Q9ULC5</id>
    </interactant>
    <interactant intactId="EBI-3921243">
        <id>O60669</id>
        <label>SLC16A7</label>
    </interactant>
    <organismsDiffer>false</organismsDiffer>
    <experiments>3</experiments>
</comment>
<comment type="interaction">
    <interactant intactId="EBI-2876927">
        <id>Q9ULC5</id>
    </interactant>
    <interactant intactId="EBI-17295964">
        <id>Q9NQQ7-3</id>
        <label>SLC35C2</label>
    </interactant>
    <organismsDiffer>false</organismsDiffer>
    <experiments>3</experiments>
</comment>
<comment type="interaction">
    <interactant intactId="EBI-2876927">
        <id>Q9ULC5</id>
    </interactant>
    <interactant intactId="EBI-5235586">
        <id>Q8TBB6</id>
        <label>SLC7A14</label>
    </interactant>
    <organismsDiffer>false</organismsDiffer>
    <experiments>3</experiments>
</comment>
<comment type="interaction">
    <interactant intactId="EBI-2876927">
        <id>Q9ULC5</id>
    </interactant>
    <interactant intactId="EBI-8638294">
        <id>Q9NUH8</id>
        <label>TMEM14B</label>
    </interactant>
    <organismsDiffer>false</organismsDiffer>
    <experiments>3</experiments>
</comment>
<comment type="subcellular location">
    <subcellularLocation>
        <location evidence="6 11">Mitochondrion</location>
    </subcellularLocation>
    <subcellularLocation>
        <location evidence="6 10 11">Endoplasmic reticulum</location>
    </subcellularLocation>
    <subcellularLocation>
        <location evidence="1">Mitochondrion outer membrane</location>
        <topology evidence="1">Single-pass type III membrane protein</topology>
    </subcellularLocation>
    <subcellularLocation>
        <location evidence="1">Endoplasmic reticulum membrane</location>
        <topology evidence="1">Single-pass type III membrane protein</topology>
    </subcellularLocation>
    <subcellularLocation>
        <location evidence="10">Cell membrane</location>
    </subcellularLocation>
</comment>
<comment type="alternative products">
    <event type="alternative splicing"/>
    <isoform>
        <id>Q9ULC5-1</id>
        <name>1</name>
        <name>ACSL5b</name>
        <name>ACSL5-fl</name>
        <sequence type="displayed"/>
    </isoform>
    <isoform>
        <id>Q9ULC5-3</id>
        <name>2</name>
        <name>ACSL5a</name>
        <sequence type="described" ref="VSP_037947"/>
    </isoform>
    <isoform>
        <id>Q9ULC5-4</id>
        <name>3</name>
        <name>ACSL5delta20</name>
        <sequence type="described" ref="VSP_038233"/>
    </isoform>
</comment>
<comment type="disease" evidence="11">
    <disease id="DI-06658">
        <name>Diarrhea 13</name>
        <acronym>DIAR13</acronym>
        <description>An autosomal recessive disorder characterized by neonatal onset of recurrent vomiting and diarrhea, leading to severe failure to thrive.</description>
        <dbReference type="MIM" id="620357"/>
    </disease>
    <text>The disease may be caused by variants affecting the gene represented in this entry.</text>
</comment>
<comment type="miscellaneous">
    <molecule>Isoform 1</molecule>
    <text>Localize in mitochondrion and endoplasmic reticulum.</text>
</comment>
<comment type="miscellaneous">
    <molecule>Isoform 3</molecule>
    <text evidence="17">Localize in mitochondrion and endoplasmic reticulum.</text>
</comment>
<comment type="similarity">
    <text evidence="17">Belongs to the ATP-dependent AMP-binding enzyme family.</text>
</comment>
<comment type="sequence caution" evidence="17">
    <conflict type="erroneous initiation">
        <sequence resource="EMBL-CDS" id="BAA85979"/>
    </conflict>
</comment>
<comment type="sequence caution" evidence="17">
    <conflict type="erroneous gene model prediction">
        <sequence resource="EMBL-CDS" id="BAA86054"/>
    </conflict>
</comment>
<proteinExistence type="evidence at protein level"/>
<sequence>MLFIFNFLFSPLPTPALICILTFGAAIFLWLITRPQPVLPLLDLNNQSVGIEGGARKGVSQKNNDLTSCCFSDAKTMYEVFQRGLAVSDNGPCLGYRKPNQPYRWLSYKQVSDRAEYLGSCLLHKGYKSSPDQFVGIFAQNRPEWIISELACYTYSMVAVPLYDTLGPEAIVHIVNKADIAMVICDTPQKALVLIGNVEKGFTPSLKVIILMDPFDDDLKQRGEKSGIEILSLYDAENLGKEHFRKPVPPSPEDLSVICFTSGTTGDPKGAMITHQNIVSNAAAFLKCVEHAYEPTPDDVAISYLPLAHMFERIVQAVVYSCGARVGFFQGDIRLLADDMKTLKPTLFPAVPRLLNRIYDKVQNEAKTPLKKFLLKLAVSSKFKELQKGIIRHDSFWDKLIFAKIQDSLGGRVRVIVTGAAPMSTSVMTFFRAAMGCQVYEAYGQTECTGGCTFTLPGDWTSGHVGVPLACNYVKLEDVADMNYFTVNNEGEVCIKGTNVFKGYLKDPEKTQEALDSDGWLHTGDIGRWLPNGTLKIIDRKKNIFKLAQGEYIAPEKIENIYNRSQPVLQIFVHGESLRSSLVGVVVPDTDVLPSFAAKLGVKGSFEELCQNQVVREAILEDLQKIGKESGLKTFEQVKAIFLHPEPFSIENGLLTPTLKAKRGELSKYFRTQIDSLYEHIQD</sequence>
<gene>
    <name evidence="21" type="primary">ACSL5</name>
    <name evidence="16" type="synonym">ACS5</name>
    <name evidence="16" type="synonym">FACL5</name>
    <name type="ORF">UNQ633/PRO1250</name>
</gene>
<accession>Q9ULC5</accession>
<accession>A6GV77</accession>
<accession>D3DRB3</accession>
<accession>Q6UX44</accession>
<accession>Q9UIU4</accession>
<dbReference type="EC" id="6.2.1.3" evidence="6 9 10"/>
<dbReference type="EC" id="6.2.1.15" evidence="2"/>
<dbReference type="EMBL" id="AM262166">
    <property type="protein sequence ID" value="CAK18174.1"/>
    <property type="molecule type" value="mRNA"/>
</dbReference>
<dbReference type="EMBL" id="AY358520">
    <property type="protein sequence ID" value="AAQ88884.1"/>
    <property type="molecule type" value="mRNA"/>
</dbReference>
<dbReference type="EMBL" id="AK000339">
    <property type="status" value="NOT_ANNOTATED_CDS"/>
    <property type="molecule type" value="mRNA"/>
</dbReference>
<dbReference type="EMBL" id="AK222782">
    <property type="status" value="NOT_ANNOTATED_CDS"/>
    <property type="molecule type" value="mRNA"/>
</dbReference>
<dbReference type="EMBL" id="AL157786">
    <property type="status" value="NOT_ANNOTATED_CDS"/>
    <property type="molecule type" value="Genomic_DNA"/>
</dbReference>
<dbReference type="EMBL" id="CH471066">
    <property type="protein sequence ID" value="EAW49532.1"/>
    <property type="molecule type" value="Genomic_DNA"/>
</dbReference>
<dbReference type="EMBL" id="CH471066">
    <property type="protein sequence ID" value="EAW49535.1"/>
    <property type="molecule type" value="Genomic_DNA"/>
</dbReference>
<dbReference type="EMBL" id="CH471066">
    <property type="protein sequence ID" value="EAW49536.1"/>
    <property type="molecule type" value="Genomic_DNA"/>
</dbReference>
<dbReference type="EMBL" id="CH471066">
    <property type="protein sequence ID" value="EAW49539.1"/>
    <property type="molecule type" value="Genomic_DNA"/>
</dbReference>
<dbReference type="EMBL" id="BC007985">
    <property type="protein sequence ID" value="AAH07985.2"/>
    <property type="molecule type" value="mRNA"/>
</dbReference>
<dbReference type="EMBL" id="AB033899">
    <property type="protein sequence ID" value="BAA85979.1"/>
    <property type="status" value="ALT_INIT"/>
    <property type="molecule type" value="mRNA"/>
</dbReference>
<dbReference type="EMBL" id="AB033920">
    <property type="protein sequence ID" value="BAA86054.1"/>
    <property type="status" value="ALT_SEQ"/>
    <property type="molecule type" value="Genomic_DNA"/>
</dbReference>
<dbReference type="CCDS" id="CCDS7572.1">
    <molecule id="Q9ULC5-3"/>
</dbReference>
<dbReference type="CCDS" id="CCDS7573.1">
    <molecule id="Q9ULC5-1"/>
</dbReference>
<dbReference type="RefSeq" id="NP_057318.2">
    <molecule id="Q9ULC5-3"/>
    <property type="nucleotide sequence ID" value="NM_016234.3"/>
</dbReference>
<dbReference type="RefSeq" id="NP_976313.1">
    <molecule id="Q9ULC5-1"/>
    <property type="nucleotide sequence ID" value="NM_203379.2"/>
</dbReference>
<dbReference type="RefSeq" id="NP_976314.1">
    <molecule id="Q9ULC5-1"/>
    <property type="nucleotide sequence ID" value="NM_203380.2"/>
</dbReference>
<dbReference type="SMR" id="Q9ULC5"/>
<dbReference type="BioGRID" id="119687">
    <property type="interactions" value="32"/>
</dbReference>
<dbReference type="FunCoup" id="Q9ULC5">
    <property type="interactions" value="1562"/>
</dbReference>
<dbReference type="IntAct" id="Q9ULC5">
    <property type="interactions" value="29"/>
</dbReference>
<dbReference type="MINT" id="Q9ULC5"/>
<dbReference type="STRING" id="9606.ENSP00000348429"/>
<dbReference type="BindingDB" id="Q9ULC5"/>
<dbReference type="ChEMBL" id="CHEMBL4105818"/>
<dbReference type="DrugCentral" id="Q9ULC5"/>
<dbReference type="SwissLipids" id="SLP:000000202"/>
<dbReference type="SwissLipids" id="SLP:000000517">
    <molecule id="Q9ULC5-3"/>
</dbReference>
<dbReference type="SwissLipids" id="SLP:000000518">
    <molecule id="Q9ULC5-1"/>
</dbReference>
<dbReference type="GlyCosmos" id="Q9ULC5">
    <property type="glycosylation" value="1 site, 1 glycan"/>
</dbReference>
<dbReference type="GlyGen" id="Q9ULC5">
    <property type="glycosylation" value="4 sites, 1 N-linked glycan (1 site), 1 O-linked glycan (1 site)"/>
</dbReference>
<dbReference type="iPTMnet" id="Q9ULC5"/>
<dbReference type="PhosphoSitePlus" id="Q9ULC5"/>
<dbReference type="SwissPalm" id="Q9ULC5"/>
<dbReference type="BioMuta" id="ACSL5"/>
<dbReference type="DMDM" id="13431659"/>
<dbReference type="jPOST" id="Q9ULC5"/>
<dbReference type="MassIVE" id="Q9ULC5"/>
<dbReference type="PaxDb" id="9606-ENSP00000348429"/>
<dbReference type="PeptideAtlas" id="Q9ULC5"/>
<dbReference type="ProteomicsDB" id="84979">
    <molecule id="Q9ULC5-1"/>
</dbReference>
<dbReference type="ProteomicsDB" id="84980">
    <molecule id="Q9ULC5-3"/>
</dbReference>
<dbReference type="ProteomicsDB" id="84981">
    <molecule id="Q9ULC5-4"/>
</dbReference>
<dbReference type="Pumba" id="Q9ULC5"/>
<dbReference type="Antibodypedia" id="31809">
    <property type="antibodies" value="279 antibodies from 33 providers"/>
</dbReference>
<dbReference type="DNASU" id="51703"/>
<dbReference type="Ensembl" id="ENST00000354655.9">
    <molecule id="Q9ULC5-1"/>
    <property type="protein sequence ID" value="ENSP00000346680.4"/>
    <property type="gene ID" value="ENSG00000197142.11"/>
</dbReference>
<dbReference type="Ensembl" id="ENST00000356116.6">
    <molecule id="Q9ULC5-3"/>
    <property type="protein sequence ID" value="ENSP00000348429.1"/>
    <property type="gene ID" value="ENSG00000197142.11"/>
</dbReference>
<dbReference type="Ensembl" id="ENST00000393081.6">
    <molecule id="Q9ULC5-1"/>
    <property type="protein sequence ID" value="ENSP00000376796.1"/>
    <property type="gene ID" value="ENSG00000197142.11"/>
</dbReference>
<dbReference type="GeneID" id="51703"/>
<dbReference type="KEGG" id="hsa:51703"/>
<dbReference type="MANE-Select" id="ENST00000354655.9">
    <property type="protein sequence ID" value="ENSP00000346680.4"/>
    <property type="RefSeq nucleotide sequence ID" value="NM_203379.2"/>
    <property type="RefSeq protein sequence ID" value="NP_976313.1"/>
</dbReference>
<dbReference type="UCSC" id="uc001kzs.4">
    <molecule id="Q9ULC5-1"/>
    <property type="organism name" value="human"/>
</dbReference>
<dbReference type="AGR" id="HGNC:16526"/>
<dbReference type="CTD" id="51703"/>
<dbReference type="DisGeNET" id="51703"/>
<dbReference type="GeneCards" id="ACSL5"/>
<dbReference type="HGNC" id="HGNC:16526">
    <property type="gene designation" value="ACSL5"/>
</dbReference>
<dbReference type="HPA" id="ENSG00000197142">
    <property type="expression patterns" value="Tissue enhanced (epididymis, intestine, liver)"/>
</dbReference>
<dbReference type="MalaCards" id="ACSL5"/>
<dbReference type="MIM" id="605677">
    <property type="type" value="gene"/>
</dbReference>
<dbReference type="MIM" id="620357">
    <property type="type" value="phenotype"/>
</dbReference>
<dbReference type="neXtProt" id="NX_Q9ULC5"/>
<dbReference type="OpenTargets" id="ENSG00000197142"/>
<dbReference type="PharmGKB" id="PA27969"/>
<dbReference type="VEuPathDB" id="HostDB:ENSG00000197142"/>
<dbReference type="eggNOG" id="KOG1256">
    <property type="taxonomic scope" value="Eukaryota"/>
</dbReference>
<dbReference type="GeneTree" id="ENSGT00940000156651"/>
<dbReference type="HOGENOM" id="CLU_000022_45_4_1"/>
<dbReference type="InParanoid" id="Q9ULC5"/>
<dbReference type="OMA" id="IWHSYER"/>
<dbReference type="OrthoDB" id="1700726at2759"/>
<dbReference type="PAN-GO" id="Q9ULC5">
    <property type="GO annotations" value="8 GO annotations based on evolutionary models"/>
</dbReference>
<dbReference type="PhylomeDB" id="Q9ULC5"/>
<dbReference type="TreeFam" id="TF313877"/>
<dbReference type="BioCyc" id="MetaCyc:HS01349-MONOMER"/>
<dbReference type="PathwayCommons" id="Q9ULC5"/>
<dbReference type="Reactome" id="R-HSA-75876">
    <property type="pathway name" value="Synthesis of very long-chain fatty acyl-CoAs"/>
</dbReference>
<dbReference type="SABIO-RK" id="Q9ULC5"/>
<dbReference type="SignaLink" id="Q9ULC5"/>
<dbReference type="SIGNOR" id="Q9ULC5"/>
<dbReference type="BioGRID-ORCS" id="51703">
    <property type="hits" value="23 hits in 1151 CRISPR screens"/>
</dbReference>
<dbReference type="ChiTaRS" id="ACSL5">
    <property type="organism name" value="human"/>
</dbReference>
<dbReference type="GeneWiki" id="ACSL5"/>
<dbReference type="GenomeRNAi" id="51703"/>
<dbReference type="Pharos" id="Q9ULC5">
    <property type="development level" value="Tchem"/>
</dbReference>
<dbReference type="PRO" id="PR:Q9ULC5"/>
<dbReference type="Proteomes" id="UP000005640">
    <property type="component" value="Chromosome 10"/>
</dbReference>
<dbReference type="RNAct" id="Q9ULC5">
    <property type="molecule type" value="protein"/>
</dbReference>
<dbReference type="Bgee" id="ENSG00000197142">
    <property type="expression patterns" value="Expressed in jejunal mucosa and 181 other cell types or tissues"/>
</dbReference>
<dbReference type="GO" id="GO:0005783">
    <property type="term" value="C:endoplasmic reticulum"/>
    <property type="evidence" value="ECO:0000314"/>
    <property type="project" value="UniProtKB"/>
</dbReference>
<dbReference type="GO" id="GO:0005789">
    <property type="term" value="C:endoplasmic reticulum membrane"/>
    <property type="evidence" value="ECO:0000304"/>
    <property type="project" value="Reactome"/>
</dbReference>
<dbReference type="GO" id="GO:0016020">
    <property type="term" value="C:membrane"/>
    <property type="evidence" value="ECO:0007005"/>
    <property type="project" value="UniProtKB"/>
</dbReference>
<dbReference type="GO" id="GO:0005741">
    <property type="term" value="C:mitochondrial outer membrane"/>
    <property type="evidence" value="ECO:0007669"/>
    <property type="project" value="UniProtKB-SubCell"/>
</dbReference>
<dbReference type="GO" id="GO:0005739">
    <property type="term" value="C:mitochondrion"/>
    <property type="evidence" value="ECO:0000314"/>
    <property type="project" value="UniProtKB"/>
</dbReference>
<dbReference type="GO" id="GO:0005730">
    <property type="term" value="C:nucleolus"/>
    <property type="evidence" value="ECO:0000314"/>
    <property type="project" value="HPA"/>
</dbReference>
<dbReference type="GO" id="GO:0005654">
    <property type="term" value="C:nucleoplasm"/>
    <property type="evidence" value="ECO:0000314"/>
    <property type="project" value="HPA"/>
</dbReference>
<dbReference type="GO" id="GO:0005886">
    <property type="term" value="C:plasma membrane"/>
    <property type="evidence" value="ECO:0000314"/>
    <property type="project" value="UniProtKB"/>
</dbReference>
<dbReference type="GO" id="GO:0047676">
    <property type="term" value="F:arachidonate-CoA ligase activity"/>
    <property type="evidence" value="ECO:0000250"/>
    <property type="project" value="UniProtKB"/>
</dbReference>
<dbReference type="GO" id="GO:0005524">
    <property type="term" value="F:ATP binding"/>
    <property type="evidence" value="ECO:0007669"/>
    <property type="project" value="UniProtKB-KW"/>
</dbReference>
<dbReference type="GO" id="GO:0004467">
    <property type="term" value="F:long-chain fatty acid-CoA ligase activity"/>
    <property type="evidence" value="ECO:0000314"/>
    <property type="project" value="UniProtKB"/>
</dbReference>
<dbReference type="GO" id="GO:0090434">
    <property type="term" value="F:oleoyl-CoA ligase activity"/>
    <property type="evidence" value="ECO:0000314"/>
    <property type="project" value="UniProtKB"/>
</dbReference>
<dbReference type="GO" id="GO:0001676">
    <property type="term" value="P:long-chain fatty acid metabolic process"/>
    <property type="evidence" value="ECO:0000314"/>
    <property type="project" value="UniProtKB"/>
</dbReference>
<dbReference type="GO" id="GO:0035338">
    <property type="term" value="P:long-chain fatty-acyl-CoA biosynthetic process"/>
    <property type="evidence" value="ECO:0000318"/>
    <property type="project" value="GO_Central"/>
</dbReference>
<dbReference type="GO" id="GO:0010747">
    <property type="term" value="P:positive regulation of long-chain fatty acid import across plasma membrane"/>
    <property type="evidence" value="ECO:0000318"/>
    <property type="project" value="GO_Central"/>
</dbReference>
<dbReference type="GO" id="GO:2001236">
    <property type="term" value="P:regulation of extrinsic apoptotic signaling pathway"/>
    <property type="evidence" value="ECO:0000314"/>
    <property type="project" value="UniProtKB"/>
</dbReference>
<dbReference type="CDD" id="cd05927">
    <property type="entry name" value="LC-FACS_euk"/>
    <property type="match status" value="1"/>
</dbReference>
<dbReference type="FunFam" id="3.40.50.12780:FF:000006">
    <property type="entry name" value="long-chain-fatty-acid--CoA ligase 6 isoform X2"/>
    <property type="match status" value="1"/>
</dbReference>
<dbReference type="Gene3D" id="3.40.50.12780">
    <property type="entry name" value="N-terminal domain of ligase-like"/>
    <property type="match status" value="1"/>
</dbReference>
<dbReference type="InterPro" id="IPR020845">
    <property type="entry name" value="AMP-binding_CS"/>
</dbReference>
<dbReference type="InterPro" id="IPR000873">
    <property type="entry name" value="AMP-dep_synth/lig_dom"/>
</dbReference>
<dbReference type="InterPro" id="IPR042099">
    <property type="entry name" value="ANL_N_sf"/>
</dbReference>
<dbReference type="InterPro" id="IPR045311">
    <property type="entry name" value="LC-FACS_euk"/>
</dbReference>
<dbReference type="PANTHER" id="PTHR43272">
    <property type="entry name" value="LONG-CHAIN-FATTY-ACID--COA LIGASE"/>
    <property type="match status" value="1"/>
</dbReference>
<dbReference type="PANTHER" id="PTHR43272:SF107">
    <property type="entry name" value="LONG-CHAIN-FATTY-ACID--COA LIGASE 5"/>
    <property type="match status" value="1"/>
</dbReference>
<dbReference type="Pfam" id="PF00501">
    <property type="entry name" value="AMP-binding"/>
    <property type="match status" value="1"/>
</dbReference>
<dbReference type="SUPFAM" id="SSF56801">
    <property type="entry name" value="Acetyl-CoA synthetase-like"/>
    <property type="match status" value="1"/>
</dbReference>
<dbReference type="PROSITE" id="PS00455">
    <property type="entry name" value="AMP_BINDING"/>
    <property type="match status" value="1"/>
</dbReference>
<name>ACSL5_HUMAN</name>
<reference key="1">
    <citation type="journal article" date="2007" name="Gastroenterology">
        <title>Regulation of enterocyte apoptosis by acyl-CoA synthetase 5 splicing.</title>
        <authorList>
            <person name="Gassler N."/>
            <person name="Roth W."/>
            <person name="Funke B."/>
            <person name="Schneider A."/>
            <person name="Herzog F."/>
            <person name="Ehemann V."/>
            <person name="Sykora J."/>
            <person name="Haas T.L."/>
            <person name="Walczak H."/>
            <person name="Ganten T."/>
            <person name="Zentgraf H."/>
            <person name="Erb P."/>
            <person name="Alonso A."/>
            <person name="Autschbach F."/>
            <person name="Schirmacher P."/>
            <person name="Knuechel R."/>
            <person name="Kopitz J."/>
        </authorList>
    </citation>
    <scope>NUCLEOTIDE SEQUENCE [MRNA] (ISOFORM 3)</scope>
    <scope>FUNCTION</scope>
    <scope>SUBCELLULAR LOCATION</scope>
    <scope>ALTERNATIVE SPLICING</scope>
    <scope>BIOPHYSICOCHEMICAL PROPERTIES</scope>
    <scope>CATALYTIC ACTIVITY</scope>
    <source>
        <tissue>Small intestine mucosa</tissue>
    </source>
</reference>
<reference key="2">
    <citation type="journal article" date="2003" name="Genome Res.">
        <title>The secreted protein discovery initiative (SPDI), a large-scale effort to identify novel human secreted and transmembrane proteins: a bioinformatics assessment.</title>
        <authorList>
            <person name="Clark H.F."/>
            <person name="Gurney A.L."/>
            <person name="Abaya E."/>
            <person name="Baker K."/>
            <person name="Baldwin D.T."/>
            <person name="Brush J."/>
            <person name="Chen J."/>
            <person name="Chow B."/>
            <person name="Chui C."/>
            <person name="Crowley C."/>
            <person name="Currell B."/>
            <person name="Deuel B."/>
            <person name="Dowd P."/>
            <person name="Eaton D."/>
            <person name="Foster J.S."/>
            <person name="Grimaldi C."/>
            <person name="Gu Q."/>
            <person name="Hass P.E."/>
            <person name="Heldens S."/>
            <person name="Huang A."/>
            <person name="Kim H.S."/>
            <person name="Klimowski L."/>
            <person name="Jin Y."/>
            <person name="Johnson S."/>
            <person name="Lee J."/>
            <person name="Lewis L."/>
            <person name="Liao D."/>
            <person name="Mark M.R."/>
            <person name="Robbie E."/>
            <person name="Sanchez C."/>
            <person name="Schoenfeld J."/>
            <person name="Seshagiri S."/>
            <person name="Simmons L."/>
            <person name="Singh J."/>
            <person name="Smith V."/>
            <person name="Stinson J."/>
            <person name="Vagts A."/>
            <person name="Vandlen R.L."/>
            <person name="Watanabe C."/>
            <person name="Wieand D."/>
            <person name="Woods K."/>
            <person name="Xie M.-H."/>
            <person name="Yansura D.G."/>
            <person name="Yi S."/>
            <person name="Yu G."/>
            <person name="Yuan J."/>
            <person name="Zhang M."/>
            <person name="Zhang Z."/>
            <person name="Goddard A.D."/>
            <person name="Wood W.I."/>
            <person name="Godowski P.J."/>
            <person name="Gray A.M."/>
        </authorList>
    </citation>
    <scope>NUCLEOTIDE SEQUENCE [LARGE SCALE MRNA] (ISOFORM 2)</scope>
</reference>
<reference key="3">
    <citation type="journal article" date="2004" name="Nat. Genet.">
        <title>Complete sequencing and characterization of 21,243 full-length human cDNAs.</title>
        <authorList>
            <person name="Ota T."/>
            <person name="Suzuki Y."/>
            <person name="Nishikawa T."/>
            <person name="Otsuki T."/>
            <person name="Sugiyama T."/>
            <person name="Irie R."/>
            <person name="Wakamatsu A."/>
            <person name="Hayashi K."/>
            <person name="Sato H."/>
            <person name="Nagai K."/>
            <person name="Kimura K."/>
            <person name="Makita H."/>
            <person name="Sekine M."/>
            <person name="Obayashi M."/>
            <person name="Nishi T."/>
            <person name="Shibahara T."/>
            <person name="Tanaka T."/>
            <person name="Ishii S."/>
            <person name="Yamamoto J."/>
            <person name="Saito K."/>
            <person name="Kawai Y."/>
            <person name="Isono Y."/>
            <person name="Nakamura Y."/>
            <person name="Nagahari K."/>
            <person name="Murakami K."/>
            <person name="Yasuda T."/>
            <person name="Iwayanagi T."/>
            <person name="Wagatsuma M."/>
            <person name="Shiratori A."/>
            <person name="Sudo H."/>
            <person name="Hosoiri T."/>
            <person name="Kaku Y."/>
            <person name="Kodaira H."/>
            <person name="Kondo H."/>
            <person name="Sugawara M."/>
            <person name="Takahashi M."/>
            <person name="Kanda K."/>
            <person name="Yokoi T."/>
            <person name="Furuya T."/>
            <person name="Kikkawa E."/>
            <person name="Omura Y."/>
            <person name="Abe K."/>
            <person name="Kamihara K."/>
            <person name="Katsuta N."/>
            <person name="Sato K."/>
            <person name="Tanikawa M."/>
            <person name="Yamazaki M."/>
            <person name="Ninomiya K."/>
            <person name="Ishibashi T."/>
            <person name="Yamashita H."/>
            <person name="Murakawa K."/>
            <person name="Fujimori K."/>
            <person name="Tanai H."/>
            <person name="Kimata M."/>
            <person name="Watanabe M."/>
            <person name="Hiraoka S."/>
            <person name="Chiba Y."/>
            <person name="Ishida S."/>
            <person name="Ono Y."/>
            <person name="Takiguchi S."/>
            <person name="Watanabe S."/>
            <person name="Yosida M."/>
            <person name="Hotuta T."/>
            <person name="Kusano J."/>
            <person name="Kanehori K."/>
            <person name="Takahashi-Fujii A."/>
            <person name="Hara H."/>
            <person name="Tanase T.-O."/>
            <person name="Nomura Y."/>
            <person name="Togiya S."/>
            <person name="Komai F."/>
            <person name="Hara R."/>
            <person name="Takeuchi K."/>
            <person name="Arita M."/>
            <person name="Imose N."/>
            <person name="Musashino K."/>
            <person name="Yuuki H."/>
            <person name="Oshima A."/>
            <person name="Sasaki N."/>
            <person name="Aotsuka S."/>
            <person name="Yoshikawa Y."/>
            <person name="Matsunawa H."/>
            <person name="Ichihara T."/>
            <person name="Shiohata N."/>
            <person name="Sano S."/>
            <person name="Moriya S."/>
            <person name="Momiyama H."/>
            <person name="Satoh N."/>
            <person name="Takami S."/>
            <person name="Terashima Y."/>
            <person name="Suzuki O."/>
            <person name="Nakagawa S."/>
            <person name="Senoh A."/>
            <person name="Mizoguchi H."/>
            <person name="Goto Y."/>
            <person name="Shimizu F."/>
            <person name="Wakebe H."/>
            <person name="Hishigaki H."/>
            <person name="Watanabe T."/>
            <person name="Sugiyama A."/>
            <person name="Takemoto M."/>
            <person name="Kawakami B."/>
            <person name="Yamazaki M."/>
            <person name="Watanabe K."/>
            <person name="Kumagai A."/>
            <person name="Itakura S."/>
            <person name="Fukuzumi Y."/>
            <person name="Fujimori Y."/>
            <person name="Komiyama M."/>
            <person name="Tashiro H."/>
            <person name="Tanigami A."/>
            <person name="Fujiwara T."/>
            <person name="Ono T."/>
            <person name="Yamada K."/>
            <person name="Fujii Y."/>
            <person name="Ozaki K."/>
            <person name="Hirao M."/>
            <person name="Ohmori Y."/>
            <person name="Kawabata A."/>
            <person name="Hikiji T."/>
            <person name="Kobatake N."/>
            <person name="Inagaki H."/>
            <person name="Ikema Y."/>
            <person name="Okamoto S."/>
            <person name="Okitani R."/>
            <person name="Kawakami T."/>
            <person name="Noguchi S."/>
            <person name="Itoh T."/>
            <person name="Shigeta K."/>
            <person name="Senba T."/>
            <person name="Matsumura K."/>
            <person name="Nakajima Y."/>
            <person name="Mizuno T."/>
            <person name="Morinaga M."/>
            <person name="Sasaki M."/>
            <person name="Togashi T."/>
            <person name="Oyama M."/>
            <person name="Hata H."/>
            <person name="Watanabe M."/>
            <person name="Komatsu T."/>
            <person name="Mizushima-Sugano J."/>
            <person name="Satoh T."/>
            <person name="Shirai Y."/>
            <person name="Takahashi Y."/>
            <person name="Nakagawa K."/>
            <person name="Okumura K."/>
            <person name="Nagase T."/>
            <person name="Nomura N."/>
            <person name="Kikuchi H."/>
            <person name="Masuho Y."/>
            <person name="Yamashita R."/>
            <person name="Nakai K."/>
            <person name="Yada T."/>
            <person name="Nakamura Y."/>
            <person name="Ohara O."/>
            <person name="Isogai T."/>
            <person name="Sugano S."/>
        </authorList>
    </citation>
    <scope>NUCLEOTIDE SEQUENCE [LARGE SCALE MRNA] (ISOFORM 1)</scope>
    <source>
        <tissue>Hepatoma</tissue>
    </source>
</reference>
<reference key="4">
    <citation type="submission" date="2005-04" db="EMBL/GenBank/DDBJ databases">
        <authorList>
            <person name="Suzuki Y."/>
            <person name="Sugano S."/>
            <person name="Totoki Y."/>
            <person name="Toyoda A."/>
            <person name="Takeda T."/>
            <person name="Sakaki Y."/>
            <person name="Tanaka A."/>
            <person name="Yokoyama S."/>
        </authorList>
    </citation>
    <scope>NUCLEOTIDE SEQUENCE [LARGE SCALE MRNA] (ISOFORM 2)</scope>
    <source>
        <tissue>Liver</tissue>
    </source>
</reference>
<reference key="5">
    <citation type="journal article" date="2004" name="Nature">
        <title>The DNA sequence and comparative analysis of human chromosome 10.</title>
        <authorList>
            <person name="Deloukas P."/>
            <person name="Earthrowl M.E."/>
            <person name="Grafham D.V."/>
            <person name="Rubenfield M."/>
            <person name="French L."/>
            <person name="Steward C.A."/>
            <person name="Sims S.K."/>
            <person name="Jones M.C."/>
            <person name="Searle S."/>
            <person name="Scott C."/>
            <person name="Howe K."/>
            <person name="Hunt S.E."/>
            <person name="Andrews T.D."/>
            <person name="Gilbert J.G.R."/>
            <person name="Swarbreck D."/>
            <person name="Ashurst J.L."/>
            <person name="Taylor A."/>
            <person name="Battles J."/>
            <person name="Bird C.P."/>
            <person name="Ainscough R."/>
            <person name="Almeida J.P."/>
            <person name="Ashwell R.I.S."/>
            <person name="Ambrose K.D."/>
            <person name="Babbage A.K."/>
            <person name="Bagguley C.L."/>
            <person name="Bailey J."/>
            <person name="Banerjee R."/>
            <person name="Bates K."/>
            <person name="Beasley H."/>
            <person name="Bray-Allen S."/>
            <person name="Brown A.J."/>
            <person name="Brown J.Y."/>
            <person name="Burford D.C."/>
            <person name="Burrill W."/>
            <person name="Burton J."/>
            <person name="Cahill P."/>
            <person name="Camire D."/>
            <person name="Carter N.P."/>
            <person name="Chapman J.C."/>
            <person name="Clark S.Y."/>
            <person name="Clarke G."/>
            <person name="Clee C.M."/>
            <person name="Clegg S."/>
            <person name="Corby N."/>
            <person name="Coulson A."/>
            <person name="Dhami P."/>
            <person name="Dutta I."/>
            <person name="Dunn M."/>
            <person name="Faulkner L."/>
            <person name="Frankish A."/>
            <person name="Frankland J.A."/>
            <person name="Garner P."/>
            <person name="Garnett J."/>
            <person name="Gribble S."/>
            <person name="Griffiths C."/>
            <person name="Grocock R."/>
            <person name="Gustafson E."/>
            <person name="Hammond S."/>
            <person name="Harley J.L."/>
            <person name="Hart E."/>
            <person name="Heath P.D."/>
            <person name="Ho T.P."/>
            <person name="Hopkins B."/>
            <person name="Horne J."/>
            <person name="Howden P.J."/>
            <person name="Huckle E."/>
            <person name="Hynds C."/>
            <person name="Johnson C."/>
            <person name="Johnson D."/>
            <person name="Kana A."/>
            <person name="Kay M."/>
            <person name="Kimberley A.M."/>
            <person name="Kershaw J.K."/>
            <person name="Kokkinaki M."/>
            <person name="Laird G.K."/>
            <person name="Lawlor S."/>
            <person name="Lee H.M."/>
            <person name="Leongamornlert D.A."/>
            <person name="Laird G."/>
            <person name="Lloyd C."/>
            <person name="Lloyd D.M."/>
            <person name="Loveland J."/>
            <person name="Lovell J."/>
            <person name="McLaren S."/>
            <person name="McLay K.E."/>
            <person name="McMurray A."/>
            <person name="Mashreghi-Mohammadi M."/>
            <person name="Matthews L."/>
            <person name="Milne S."/>
            <person name="Nickerson T."/>
            <person name="Nguyen M."/>
            <person name="Overton-Larty E."/>
            <person name="Palmer S.A."/>
            <person name="Pearce A.V."/>
            <person name="Peck A.I."/>
            <person name="Pelan S."/>
            <person name="Phillimore B."/>
            <person name="Porter K."/>
            <person name="Rice C.M."/>
            <person name="Rogosin A."/>
            <person name="Ross M.T."/>
            <person name="Sarafidou T."/>
            <person name="Sehra H.K."/>
            <person name="Shownkeen R."/>
            <person name="Skuce C.D."/>
            <person name="Smith M."/>
            <person name="Standring L."/>
            <person name="Sycamore N."/>
            <person name="Tester J."/>
            <person name="Thorpe A."/>
            <person name="Torcasso W."/>
            <person name="Tracey A."/>
            <person name="Tromans A."/>
            <person name="Tsolas J."/>
            <person name="Wall M."/>
            <person name="Walsh J."/>
            <person name="Wang H."/>
            <person name="Weinstock K."/>
            <person name="West A.P."/>
            <person name="Willey D.L."/>
            <person name="Whitehead S.L."/>
            <person name="Wilming L."/>
            <person name="Wray P.W."/>
            <person name="Young L."/>
            <person name="Chen Y."/>
            <person name="Lovering R.C."/>
            <person name="Moschonas N.K."/>
            <person name="Siebert R."/>
            <person name="Fechtel K."/>
            <person name="Bentley D."/>
            <person name="Durbin R.M."/>
            <person name="Hubbard T."/>
            <person name="Doucette-Stamm L."/>
            <person name="Beck S."/>
            <person name="Smith D.R."/>
            <person name="Rogers J."/>
        </authorList>
    </citation>
    <scope>NUCLEOTIDE SEQUENCE [LARGE SCALE GENOMIC DNA]</scope>
</reference>
<reference key="6">
    <citation type="submission" date="2005-09" db="EMBL/GenBank/DDBJ databases">
        <authorList>
            <person name="Mural R.J."/>
            <person name="Istrail S."/>
            <person name="Sutton G.G."/>
            <person name="Florea L."/>
            <person name="Halpern A.L."/>
            <person name="Mobarry C.M."/>
            <person name="Lippert R."/>
            <person name="Walenz B."/>
            <person name="Shatkay H."/>
            <person name="Dew I."/>
            <person name="Miller J.R."/>
            <person name="Flanigan M.J."/>
            <person name="Edwards N.J."/>
            <person name="Bolanos R."/>
            <person name="Fasulo D."/>
            <person name="Halldorsson B.V."/>
            <person name="Hannenhalli S."/>
            <person name="Turner R."/>
            <person name="Yooseph S."/>
            <person name="Lu F."/>
            <person name="Nusskern D.R."/>
            <person name="Shue B.C."/>
            <person name="Zheng X.H."/>
            <person name="Zhong F."/>
            <person name="Delcher A.L."/>
            <person name="Huson D.H."/>
            <person name="Kravitz S.A."/>
            <person name="Mouchard L."/>
            <person name="Reinert K."/>
            <person name="Remington K.A."/>
            <person name="Clark A.G."/>
            <person name="Waterman M.S."/>
            <person name="Eichler E.E."/>
            <person name="Adams M.D."/>
            <person name="Hunkapiller M.W."/>
            <person name="Myers E.W."/>
            <person name="Venter J.C."/>
        </authorList>
    </citation>
    <scope>NUCLEOTIDE SEQUENCE [LARGE SCALE GENOMIC DNA]</scope>
</reference>
<reference key="7">
    <citation type="journal article" date="2004" name="Genome Res.">
        <title>The status, quality, and expansion of the NIH full-length cDNA project: the Mammalian Gene Collection (MGC).</title>
        <authorList>
            <consortium name="The MGC Project Team"/>
        </authorList>
    </citation>
    <scope>NUCLEOTIDE SEQUENCE [LARGE SCALE MRNA] (ISOFORM 2)</scope>
    <source>
        <tissue>Colon</tissue>
    </source>
</reference>
<reference key="8">
    <citation type="submission" date="1999-10" db="EMBL/GenBank/DDBJ databases">
        <title>Human FACL5 (or ACS5).</title>
        <authorList>
            <person name="Yamashita Y."/>
        </authorList>
    </citation>
    <scope>PARTIAL NUCLEOTIDE SEQUENCE [GENOMIC DNA / MRNA] (ISOFORM 2)</scope>
</reference>
<reference key="9">
    <citation type="journal article" date="2008" name="Mol. Cell">
        <title>Kinase-selective enrichment enables quantitative phosphoproteomics of the kinome across the cell cycle.</title>
        <authorList>
            <person name="Daub H."/>
            <person name="Olsen J.V."/>
            <person name="Bairlein M."/>
            <person name="Gnad F."/>
            <person name="Oppermann F.S."/>
            <person name="Korner R."/>
            <person name="Greff Z."/>
            <person name="Keri G."/>
            <person name="Stemmann O."/>
            <person name="Mann M."/>
        </authorList>
    </citation>
    <scope>PHOSPHORYLATION [LARGE SCALE ANALYSIS] AT SER-32 (ISOFORM 2)</scope>
    <scope>IDENTIFICATION BY MASS SPECTROMETRY [LARGE SCALE ANALYSIS]</scope>
    <source>
        <tissue>Cervix carcinoma</tissue>
    </source>
</reference>
<reference key="10">
    <citation type="journal article" date="2009" name="Cancer Sci.">
        <title>Acyl-CoA synthetase as a cancer survival factor: its inhibition enhances the efficacy of etoposide.</title>
        <authorList>
            <person name="Mashima T."/>
            <person name="Sato S."/>
            <person name="Okabe S."/>
            <person name="Miyata S."/>
            <person name="Matsuura M."/>
            <person name="Sugimoto Y."/>
            <person name="Tsuruo T."/>
            <person name="Seimiya H."/>
        </authorList>
    </citation>
    <scope>FUNCTION</scope>
</reference>
<reference key="11">
    <citation type="journal article" date="2009" name="Oncogene">
        <title>Promotion of glioma cell survival by acyl-CoA synthetase 5 under extracellular acidosis conditions.</title>
        <authorList>
            <person name="Mashima T."/>
            <person name="Sato S."/>
            <person name="Sugimoto Y."/>
            <person name="Tsuruo T."/>
            <person name="Seimiya H."/>
        </authorList>
    </citation>
    <scope>FUNCTION</scope>
    <scope>SUBCELLULAR LOCATION</scope>
</reference>
<reference key="12">
    <citation type="journal article" date="2011" name="BMC Syst. Biol.">
        <title>Initial characterization of the human central proteome.</title>
        <authorList>
            <person name="Burkard T.R."/>
            <person name="Planyavsky M."/>
            <person name="Kaupe I."/>
            <person name="Breitwieser F.P."/>
            <person name="Buerckstuemmer T."/>
            <person name="Bennett K.L."/>
            <person name="Superti-Furga G."/>
            <person name="Colinge J."/>
        </authorList>
    </citation>
    <scope>IDENTIFICATION BY MASS SPECTROMETRY [LARGE SCALE ANALYSIS]</scope>
</reference>
<reference key="13">
    <citation type="journal article" date="2012" name="Mol. Cell">
        <title>The Sjogren-Larsson syndrome gene encodes a hexadecenal dehydrogenase of the sphingosine 1-phosphate degradation pathway.</title>
        <authorList>
            <person name="Nakahara K."/>
            <person name="Ohkuni A."/>
            <person name="Kitamura T."/>
            <person name="Abe K."/>
            <person name="Naganuma T."/>
            <person name="Ohno Y."/>
            <person name="Zoeller R.A."/>
            <person name="Kihara A."/>
        </authorList>
    </citation>
    <scope>CATALYTIC ACTIVITY</scope>
    <scope>FUNCTION</scope>
</reference>
<reference key="14">
    <citation type="journal article" date="2013" name="Biochem. Biophys. Res. Commun.">
        <title>Identification of acyl-CoA synthetases involved in the mammalian sphingosine 1-phosphate metabolic pathway.</title>
        <authorList>
            <person name="Ohkuni A."/>
            <person name="Ohno Y."/>
            <person name="Kihara A."/>
        </authorList>
    </citation>
    <scope>CATALYTIC ACTIVITY</scope>
    <scope>FUNCTION</scope>
    <scope>SUBCELLULAR LOCATION</scope>
</reference>
<reference key="15">
    <citation type="journal article" date="2014" name="J. Proteomics">
        <title>An enzyme assisted RP-RPLC approach for in-depth analysis of human liver phosphoproteome.</title>
        <authorList>
            <person name="Bian Y."/>
            <person name="Song C."/>
            <person name="Cheng K."/>
            <person name="Dong M."/>
            <person name="Wang F."/>
            <person name="Huang J."/>
            <person name="Sun D."/>
            <person name="Wang L."/>
            <person name="Ye M."/>
            <person name="Zou H."/>
        </authorList>
    </citation>
    <scope>IDENTIFICATION BY MASS SPECTROMETRY [LARGE SCALE ANALYSIS]</scope>
    <source>
        <tissue>Liver</tissue>
    </source>
</reference>
<reference key="16">
    <citation type="journal article" date="2006" name="Science">
        <title>The consensus coding sequences of human breast and colorectal cancers.</title>
        <authorList>
            <person name="Sjoeblom T."/>
            <person name="Jones S."/>
            <person name="Wood L.D."/>
            <person name="Parsons D.W."/>
            <person name="Lin J."/>
            <person name="Barber T.D."/>
            <person name="Mandelker D."/>
            <person name="Leary R.J."/>
            <person name="Ptak J."/>
            <person name="Silliman N."/>
            <person name="Szabo S."/>
            <person name="Buckhaults P."/>
            <person name="Farrell C."/>
            <person name="Meeh P."/>
            <person name="Markowitz S.D."/>
            <person name="Willis J."/>
            <person name="Dawson D."/>
            <person name="Willson J.K.V."/>
            <person name="Gazdar A.F."/>
            <person name="Hartigan J."/>
            <person name="Wu L."/>
            <person name="Liu C."/>
            <person name="Parmigiani G."/>
            <person name="Park B.H."/>
            <person name="Bachman K.E."/>
            <person name="Papadopoulos N."/>
            <person name="Vogelstein B."/>
            <person name="Kinzler K.W."/>
            <person name="Velculescu V.E."/>
        </authorList>
    </citation>
    <scope>VARIANTS [LARGE SCALE ANALYSIS] ARG-388 AND ASP-466</scope>
</reference>
<reference key="17">
    <citation type="journal article" date="2021" name="Clin. Genet.">
        <title>Deficiency of acyl-CoA synthetase 5 is associated with a severe and treatable failure to thrive of neonatal onset.</title>
        <authorList>
            <person name="Al-Thihli K."/>
            <person name="Afting C."/>
            <person name="Al-Hashmi N."/>
            <person name="Mohammed M."/>
            <person name="Sliwinski S."/>
            <person name="Al Shibli N."/>
            <person name="Al-Said K."/>
            <person name="Al-Kasbi G."/>
            <person name="Al-Kharusi K."/>
            <person name="Merle U."/>
            <person name="Fuellekrug J."/>
            <person name="Al-Maawali A."/>
        </authorList>
    </citation>
    <scope>VARIANT DIAR13 LYS-453</scope>
    <scope>CHARACTERIZATION OF VARIANT DIAR13 LYS-453</scope>
    <scope>INVOLVEMENT IN DIAR13</scope>
    <scope>FUNCTION</scope>
    <scope>CATALYTIC ACTIVITY</scope>
    <scope>SUBCELLULAR LOCATION</scope>
</reference>
<keyword id="KW-0007">Acetylation</keyword>
<keyword id="KW-0025">Alternative splicing</keyword>
<keyword id="KW-0067">ATP-binding</keyword>
<keyword id="KW-1003">Cell membrane</keyword>
<keyword id="KW-0225">Disease variant</keyword>
<keyword id="KW-0256">Endoplasmic reticulum</keyword>
<keyword id="KW-0276">Fatty acid metabolism</keyword>
<keyword id="KW-0436">Ligase</keyword>
<keyword id="KW-0443">Lipid metabolism</keyword>
<keyword id="KW-0460">Magnesium</keyword>
<keyword id="KW-0472">Membrane</keyword>
<keyword id="KW-0496">Mitochondrion</keyword>
<keyword id="KW-1000">Mitochondrion outer membrane</keyword>
<keyword id="KW-0547">Nucleotide-binding</keyword>
<keyword id="KW-0597">Phosphoprotein</keyword>
<keyword id="KW-1267">Proteomics identification</keyword>
<keyword id="KW-1185">Reference proteome</keyword>
<keyword id="KW-0735">Signal-anchor</keyword>
<keyword id="KW-0812">Transmembrane</keyword>
<keyword id="KW-1133">Transmembrane helix</keyword>
<protein>
    <recommendedName>
        <fullName evidence="17">Long-chain-fatty-acid--CoA ligase 5</fullName>
        <ecNumber evidence="6 9 10">6.2.1.3</ecNumber>
    </recommendedName>
    <alternativeName>
        <fullName evidence="17">Arachidonate--CoA ligase</fullName>
        <ecNumber evidence="2">6.2.1.15</ecNumber>
    </alternativeName>
    <alternativeName>
        <fullName>Long-chain acyl-CoA synthetase 5</fullName>
        <shortName>LACS 5</shortName>
    </alternativeName>
</protein>
<organism>
    <name type="scientific">Homo sapiens</name>
    <name type="common">Human</name>
    <dbReference type="NCBI Taxonomy" id="9606"/>
    <lineage>
        <taxon>Eukaryota</taxon>
        <taxon>Metazoa</taxon>
        <taxon>Chordata</taxon>
        <taxon>Craniata</taxon>
        <taxon>Vertebrata</taxon>
        <taxon>Euteleostomi</taxon>
        <taxon>Mammalia</taxon>
        <taxon>Eutheria</taxon>
        <taxon>Euarchontoglires</taxon>
        <taxon>Primates</taxon>
        <taxon>Haplorrhini</taxon>
        <taxon>Catarrhini</taxon>
        <taxon>Hominidae</taxon>
        <taxon>Homo</taxon>
    </lineage>
</organism>